<reference key="1">
    <citation type="journal article" date="2008" name="J. Bacteriol.">
        <title>Insights into the environmental resistance gene pool from the genome sequence of the multidrug-resistant environmental isolate Escherichia coli SMS-3-5.</title>
        <authorList>
            <person name="Fricke W.F."/>
            <person name="Wright M.S."/>
            <person name="Lindell A.H."/>
            <person name="Harkins D.M."/>
            <person name="Baker-Austin C."/>
            <person name="Ravel J."/>
            <person name="Stepanauskas R."/>
        </authorList>
    </citation>
    <scope>NUCLEOTIDE SEQUENCE [LARGE SCALE GENOMIC DNA]</scope>
    <source>
        <strain>SMS-3-5 / SECEC</strain>
    </source>
</reference>
<accession>B1LIN5</accession>
<evidence type="ECO:0000255" key="1">
    <source>
        <dbReference type="HAMAP-Rule" id="MF_01655"/>
    </source>
</evidence>
<feature type="chain" id="PRO_1000187026" description="2-keto-4-pentenoate hydratase">
    <location>
        <begin position="1"/>
        <end position="269"/>
    </location>
</feature>
<name>MHPD_ECOSM</name>
<keyword id="KW-0058">Aromatic hydrocarbons catabolism</keyword>
<keyword id="KW-0456">Lyase</keyword>
<comment type="function">
    <text evidence="1">Catalyzes the conversion of 2-hydroxypentadienoic acid (enolic form of 2-oxopent-4-enoate) to 4-hydroxy-2-ketopentanoic acid.</text>
</comment>
<comment type="catalytic activity">
    <reaction evidence="1">
        <text>(S)-4-hydroxy-2-oxopentanoate = (2Z)-2-hydroxypenta-2,4-dienoate + H2O</text>
        <dbReference type="Rhea" id="RHEA:22580"/>
        <dbReference type="ChEBI" id="CHEBI:15377"/>
        <dbReference type="ChEBI" id="CHEBI:67152"/>
        <dbReference type="ChEBI" id="CHEBI:73143"/>
        <dbReference type="EC" id="4.2.1.80"/>
    </reaction>
</comment>
<comment type="cofactor">
    <cofactor evidence="1">
        <name>a divalent metal cation</name>
        <dbReference type="ChEBI" id="CHEBI:60240"/>
    </cofactor>
</comment>
<comment type="pathway">
    <text evidence="1">Aromatic compound metabolism; 3-phenylpropanoate degradation.</text>
</comment>
<comment type="similarity">
    <text evidence="1">Belongs to the hydratase/decarboxylase family. MhpD subfamily.</text>
</comment>
<dbReference type="EC" id="4.2.1.80" evidence="1"/>
<dbReference type="EMBL" id="CP000970">
    <property type="protein sequence ID" value="ACB19909.1"/>
    <property type="molecule type" value="Genomic_DNA"/>
</dbReference>
<dbReference type="RefSeq" id="WP_000160712.1">
    <property type="nucleotide sequence ID" value="NC_010498.1"/>
</dbReference>
<dbReference type="SMR" id="B1LIN5"/>
<dbReference type="KEGG" id="ecm:EcSMS35_0381"/>
<dbReference type="HOGENOM" id="CLU_060136_4_1_6"/>
<dbReference type="UniPathway" id="UPA00714"/>
<dbReference type="Proteomes" id="UP000007011">
    <property type="component" value="Chromosome"/>
</dbReference>
<dbReference type="GO" id="GO:0005737">
    <property type="term" value="C:cytoplasm"/>
    <property type="evidence" value="ECO:0007669"/>
    <property type="project" value="TreeGrafter"/>
</dbReference>
<dbReference type="GO" id="GO:0008684">
    <property type="term" value="F:2-oxopent-4-enoate hydratase activity"/>
    <property type="evidence" value="ECO:0007669"/>
    <property type="project" value="UniProtKB-UniRule"/>
</dbReference>
<dbReference type="GO" id="GO:0030145">
    <property type="term" value="F:manganese ion binding"/>
    <property type="evidence" value="ECO:0007669"/>
    <property type="project" value="InterPro"/>
</dbReference>
<dbReference type="GO" id="GO:0019380">
    <property type="term" value="P:3-phenylpropionate catabolic process"/>
    <property type="evidence" value="ECO:0007669"/>
    <property type="project" value="UniProtKB-UniRule"/>
</dbReference>
<dbReference type="FunFam" id="3.90.850.10:FF:000006">
    <property type="entry name" value="2-keto-4-pentenoate hydratase"/>
    <property type="match status" value="1"/>
</dbReference>
<dbReference type="Gene3D" id="3.90.850.10">
    <property type="entry name" value="Fumarylacetoacetase-like, C-terminal domain"/>
    <property type="match status" value="1"/>
</dbReference>
<dbReference type="HAMAP" id="MF_01655">
    <property type="entry name" value="MhpD"/>
    <property type="match status" value="1"/>
</dbReference>
<dbReference type="InterPro" id="IPR011234">
    <property type="entry name" value="Fumarylacetoacetase-like_C"/>
</dbReference>
<dbReference type="InterPro" id="IPR036663">
    <property type="entry name" value="Fumarylacetoacetase_C_sf"/>
</dbReference>
<dbReference type="InterPro" id="IPR050772">
    <property type="entry name" value="Hydratase-Decarb/MhpD_sf"/>
</dbReference>
<dbReference type="InterPro" id="IPR023793">
    <property type="entry name" value="Keto_pentenoate-hydratase"/>
</dbReference>
<dbReference type="NCBIfam" id="NF008461">
    <property type="entry name" value="PRK11342.1"/>
    <property type="match status" value="1"/>
</dbReference>
<dbReference type="PANTHER" id="PTHR30143:SF0">
    <property type="entry name" value="2-KETO-4-PENTENOATE HYDRATASE"/>
    <property type="match status" value="1"/>
</dbReference>
<dbReference type="PANTHER" id="PTHR30143">
    <property type="entry name" value="ACID HYDRATASE"/>
    <property type="match status" value="1"/>
</dbReference>
<dbReference type="Pfam" id="PF01557">
    <property type="entry name" value="FAA_hydrolase"/>
    <property type="match status" value="1"/>
</dbReference>
<dbReference type="SUPFAM" id="SSF56529">
    <property type="entry name" value="FAH"/>
    <property type="match status" value="1"/>
</dbReference>
<gene>
    <name evidence="1" type="primary">mhpD</name>
    <name type="ordered locus">EcSMS35_0381</name>
</gene>
<proteinExistence type="inferred from homology"/>
<protein>
    <recommendedName>
        <fullName evidence="1">2-keto-4-pentenoate hydratase</fullName>
        <ecNumber evidence="1">4.2.1.80</ecNumber>
    </recommendedName>
    <alternativeName>
        <fullName evidence="1">2-hydroxypentadienoic acid hydratase</fullName>
    </alternativeName>
</protein>
<organism>
    <name type="scientific">Escherichia coli (strain SMS-3-5 / SECEC)</name>
    <dbReference type="NCBI Taxonomy" id="439855"/>
    <lineage>
        <taxon>Bacteria</taxon>
        <taxon>Pseudomonadati</taxon>
        <taxon>Pseudomonadota</taxon>
        <taxon>Gammaproteobacteria</taxon>
        <taxon>Enterobacterales</taxon>
        <taxon>Enterobacteriaceae</taxon>
        <taxon>Escherichia</taxon>
    </lineage>
</organism>
<sequence>MTKHTLEQLAADLRRAAEQGEAIAPLRDLIGIDNAEAAYAIQHINVQHDVAQGRRVVGRKVGLTHPKVQQQLGVDQPDFGTLFADMCYGDNETIPFSRVLQPRIEAEIALVLNRDLPATDITFDELYNAIEWVLPALEVVGSRIRDWSIQFVDTVADNASCGVYVIGGPAQRPAGLDLKNCAMKMTRNNEEVSSGRGSECLGHPLNAAVWLARKMASLGEPLRAGDIILTGALGPMVAVNAGDRFEAHIEGIGSVAATFSSAAPKGSLS</sequence>